<evidence type="ECO:0000250" key="1"/>
<evidence type="ECO:0000255" key="2">
    <source>
        <dbReference type="HAMAP-Rule" id="MF_00100"/>
    </source>
</evidence>
<evidence type="ECO:0000256" key="3">
    <source>
        <dbReference type="SAM" id="MobiDB-lite"/>
    </source>
</evidence>
<sequence length="945" mass="102381">MEQMSVTQFAGELKMPASVLLEQLQKAGVEKTGADQLLTEQDKARLLEYLRRSHGQSQPKGKITLTRKQTSEIRATDSSGRARTVQVEVRKKRVFMKRDEVSAETGSLESAQIEEETAGLPMGEIEPTPEPENIVEPVAEAIPEPEPVREPEPEPEPIVEPEPEPEPEPEPEPQPEPEPRPEPEPATVESGAPAKPEAPVRAPSRPPLRVSILSDEERAAREREARRHQELRARQAADLKAKQDREAAARAAAEARRAEEEARVRAEAERRAEAAKPQPKEAAKAPAGTLHRPAKTEEKPAGKDAKRTARGDTAGESAKRRGLKTRGEVGATTGSWRGARGGGRRGAQDEHKSFQAPTEPVVREIHVPETISVADLAHKMSVKAAEVIKILMKMGSMVTINQVLDQETAMILVEEMGHKAFAAKLDDPDTYLESAEAHHDAAVEPRAPVVTVMGHVDHGKTSLLDYIRRAKVASGEAGGITQHIGAYHVETPRGMLTFLDTPGHEAFTAMRARGAKATDIVILVVAADDGVMPQTREAIHHAKAANVPLVVAVNKIDKPDANPDRVKQELVAEGVLPEEYGGDVMFINVSAKTGVGIDSLLEAVLLQAEVLELTAPVDSPAKGLIIEARLDKGRGPVASLLVLSGTLRKGDVMLVGATFGRIRAMLDENGKAIDHAGPSIPVEVLGLSDVPAAGDEAIALADEKKAREIALFRQGKYREVKLAKQQAAKLESMFEQMAEGEVKTLPLIIKADVQGSQEALVQALNKLSTDEVRVNAIHSAVGAISESDVNLAQASGAVIIGFNTRADAGARKLAETFGVDIRYYNIIYDAVDEVKAALSGMLAPERRENVIGLVEVRQVFKVPKVGTVAGCYVLEGVVKRGSQVRVLRNHVVIHNGELESLKRFKDDVKEVKFGFECGLSIRNFNDVQEGDQLEVFEIQEIARTL</sequence>
<comment type="function">
    <text evidence="2">One of the essential components for the initiation of protein synthesis. Protects formylmethionyl-tRNA from spontaneous hydrolysis and promotes its binding to the 30S ribosomal subunits. Also involved in the hydrolysis of GTP during the formation of the 70S ribosomal complex.</text>
</comment>
<comment type="subcellular location">
    <subcellularLocation>
        <location evidence="2">Cytoplasm</location>
    </subcellularLocation>
</comment>
<comment type="similarity">
    <text evidence="2">Belongs to the TRAFAC class translation factor GTPase superfamily. Classic translation factor GTPase family. IF-2 subfamily.</text>
</comment>
<name>IF2_AROAE</name>
<proteinExistence type="inferred from homology"/>
<organism>
    <name type="scientific">Aromatoleum aromaticum (strain DSM 19018 / LMG 30748 / EbN1)</name>
    <name type="common">Azoarcus sp. (strain EbN1)</name>
    <dbReference type="NCBI Taxonomy" id="76114"/>
    <lineage>
        <taxon>Bacteria</taxon>
        <taxon>Pseudomonadati</taxon>
        <taxon>Pseudomonadota</taxon>
        <taxon>Betaproteobacteria</taxon>
        <taxon>Rhodocyclales</taxon>
        <taxon>Rhodocyclaceae</taxon>
        <taxon>Aromatoleum</taxon>
    </lineage>
</organism>
<gene>
    <name evidence="2" type="primary">infB</name>
    <name type="ordered locus">AZOSEA33180</name>
    <name type="ORF">ebA5841</name>
</gene>
<dbReference type="EMBL" id="CR555306">
    <property type="protein sequence ID" value="CAI09443.1"/>
    <property type="molecule type" value="Genomic_DNA"/>
</dbReference>
<dbReference type="RefSeq" id="WP_011239106.1">
    <property type="nucleotide sequence ID" value="NC_006513.1"/>
</dbReference>
<dbReference type="SMR" id="Q5NZS1"/>
<dbReference type="STRING" id="76114.ebA5841"/>
<dbReference type="KEGG" id="eba:ebA5841"/>
<dbReference type="eggNOG" id="COG0532">
    <property type="taxonomic scope" value="Bacteria"/>
</dbReference>
<dbReference type="HOGENOM" id="CLU_006301_6_0_4"/>
<dbReference type="OrthoDB" id="9811804at2"/>
<dbReference type="Proteomes" id="UP000006552">
    <property type="component" value="Chromosome"/>
</dbReference>
<dbReference type="GO" id="GO:0005829">
    <property type="term" value="C:cytosol"/>
    <property type="evidence" value="ECO:0007669"/>
    <property type="project" value="TreeGrafter"/>
</dbReference>
<dbReference type="GO" id="GO:0005525">
    <property type="term" value="F:GTP binding"/>
    <property type="evidence" value="ECO:0007669"/>
    <property type="project" value="UniProtKB-KW"/>
</dbReference>
<dbReference type="GO" id="GO:0003924">
    <property type="term" value="F:GTPase activity"/>
    <property type="evidence" value="ECO:0007669"/>
    <property type="project" value="UniProtKB-UniRule"/>
</dbReference>
<dbReference type="GO" id="GO:0097216">
    <property type="term" value="F:guanosine tetraphosphate binding"/>
    <property type="evidence" value="ECO:0007669"/>
    <property type="project" value="UniProtKB-ARBA"/>
</dbReference>
<dbReference type="GO" id="GO:0003743">
    <property type="term" value="F:translation initiation factor activity"/>
    <property type="evidence" value="ECO:0007669"/>
    <property type="project" value="UniProtKB-UniRule"/>
</dbReference>
<dbReference type="CDD" id="cd01887">
    <property type="entry name" value="IF2_eIF5B"/>
    <property type="match status" value="1"/>
</dbReference>
<dbReference type="CDD" id="cd03702">
    <property type="entry name" value="IF2_mtIF2_II"/>
    <property type="match status" value="1"/>
</dbReference>
<dbReference type="CDD" id="cd03692">
    <property type="entry name" value="mtIF2_IVc"/>
    <property type="match status" value="1"/>
</dbReference>
<dbReference type="FunFam" id="2.40.30.10:FF:000007">
    <property type="entry name" value="Translation initiation factor IF-2"/>
    <property type="match status" value="1"/>
</dbReference>
<dbReference type="FunFam" id="2.40.30.10:FF:000008">
    <property type="entry name" value="Translation initiation factor IF-2"/>
    <property type="match status" value="1"/>
</dbReference>
<dbReference type="FunFam" id="3.40.50.10050:FF:000001">
    <property type="entry name" value="Translation initiation factor IF-2"/>
    <property type="match status" value="1"/>
</dbReference>
<dbReference type="FunFam" id="3.40.50.300:FF:000019">
    <property type="entry name" value="Translation initiation factor IF-2"/>
    <property type="match status" value="1"/>
</dbReference>
<dbReference type="Gene3D" id="3.40.50.300">
    <property type="entry name" value="P-loop containing nucleotide triphosphate hydrolases"/>
    <property type="match status" value="1"/>
</dbReference>
<dbReference type="Gene3D" id="3.30.56.50">
    <property type="entry name" value="Putative DNA-binding domain, N-terminal subdomain of bacterial translation initiation factor IF2"/>
    <property type="match status" value="1"/>
</dbReference>
<dbReference type="Gene3D" id="2.40.30.10">
    <property type="entry name" value="Translation factors"/>
    <property type="match status" value="2"/>
</dbReference>
<dbReference type="Gene3D" id="3.40.50.10050">
    <property type="entry name" value="Translation initiation factor IF- 2, domain 3"/>
    <property type="match status" value="1"/>
</dbReference>
<dbReference type="HAMAP" id="MF_00100_B">
    <property type="entry name" value="IF_2_B"/>
    <property type="match status" value="1"/>
</dbReference>
<dbReference type="InterPro" id="IPR009061">
    <property type="entry name" value="DNA-bd_dom_put_sf"/>
</dbReference>
<dbReference type="InterPro" id="IPR053905">
    <property type="entry name" value="EF-G-like_DII"/>
</dbReference>
<dbReference type="InterPro" id="IPR004161">
    <property type="entry name" value="EFTu-like_2"/>
</dbReference>
<dbReference type="InterPro" id="IPR013575">
    <property type="entry name" value="IF2_assoc_dom_bac"/>
</dbReference>
<dbReference type="InterPro" id="IPR044145">
    <property type="entry name" value="IF2_II"/>
</dbReference>
<dbReference type="InterPro" id="IPR006847">
    <property type="entry name" value="IF2_N"/>
</dbReference>
<dbReference type="InterPro" id="IPR027417">
    <property type="entry name" value="P-loop_NTPase"/>
</dbReference>
<dbReference type="InterPro" id="IPR005225">
    <property type="entry name" value="Small_GTP-bd"/>
</dbReference>
<dbReference type="InterPro" id="IPR000795">
    <property type="entry name" value="T_Tr_GTP-bd_dom"/>
</dbReference>
<dbReference type="InterPro" id="IPR000178">
    <property type="entry name" value="TF_IF2_bacterial-like"/>
</dbReference>
<dbReference type="InterPro" id="IPR015760">
    <property type="entry name" value="TIF_IF2"/>
</dbReference>
<dbReference type="InterPro" id="IPR023115">
    <property type="entry name" value="TIF_IF2_dom3"/>
</dbReference>
<dbReference type="InterPro" id="IPR036925">
    <property type="entry name" value="TIF_IF2_dom3_sf"/>
</dbReference>
<dbReference type="InterPro" id="IPR009000">
    <property type="entry name" value="Transl_B-barrel_sf"/>
</dbReference>
<dbReference type="NCBIfam" id="TIGR00487">
    <property type="entry name" value="IF-2"/>
    <property type="match status" value="1"/>
</dbReference>
<dbReference type="NCBIfam" id="TIGR00231">
    <property type="entry name" value="small_GTP"/>
    <property type="match status" value="1"/>
</dbReference>
<dbReference type="PANTHER" id="PTHR43381:SF5">
    <property type="entry name" value="TR-TYPE G DOMAIN-CONTAINING PROTEIN"/>
    <property type="match status" value="1"/>
</dbReference>
<dbReference type="PANTHER" id="PTHR43381">
    <property type="entry name" value="TRANSLATION INITIATION FACTOR IF-2-RELATED"/>
    <property type="match status" value="1"/>
</dbReference>
<dbReference type="Pfam" id="PF22042">
    <property type="entry name" value="EF-G_D2"/>
    <property type="match status" value="1"/>
</dbReference>
<dbReference type="Pfam" id="PF00009">
    <property type="entry name" value="GTP_EFTU"/>
    <property type="match status" value="1"/>
</dbReference>
<dbReference type="Pfam" id="PF03144">
    <property type="entry name" value="GTP_EFTU_D2"/>
    <property type="match status" value="1"/>
</dbReference>
<dbReference type="Pfam" id="PF11987">
    <property type="entry name" value="IF-2"/>
    <property type="match status" value="1"/>
</dbReference>
<dbReference type="Pfam" id="PF08364">
    <property type="entry name" value="IF2_assoc"/>
    <property type="match status" value="1"/>
</dbReference>
<dbReference type="Pfam" id="PF04760">
    <property type="entry name" value="IF2_N"/>
    <property type="match status" value="2"/>
</dbReference>
<dbReference type="SUPFAM" id="SSF52156">
    <property type="entry name" value="Initiation factor IF2/eIF5b, domain 3"/>
    <property type="match status" value="1"/>
</dbReference>
<dbReference type="SUPFAM" id="SSF52540">
    <property type="entry name" value="P-loop containing nucleoside triphosphate hydrolases"/>
    <property type="match status" value="1"/>
</dbReference>
<dbReference type="SUPFAM" id="SSF46955">
    <property type="entry name" value="Putative DNA-binding domain"/>
    <property type="match status" value="1"/>
</dbReference>
<dbReference type="SUPFAM" id="SSF50447">
    <property type="entry name" value="Translation proteins"/>
    <property type="match status" value="2"/>
</dbReference>
<dbReference type="PROSITE" id="PS51722">
    <property type="entry name" value="G_TR_2"/>
    <property type="match status" value="1"/>
</dbReference>
<dbReference type="PROSITE" id="PS01176">
    <property type="entry name" value="IF2"/>
    <property type="match status" value="1"/>
</dbReference>
<reference key="1">
    <citation type="journal article" date="2005" name="Arch. Microbiol.">
        <title>The genome sequence of an anaerobic aromatic-degrading denitrifying bacterium, strain EbN1.</title>
        <authorList>
            <person name="Rabus R."/>
            <person name="Kube M."/>
            <person name="Heider J."/>
            <person name="Beck A."/>
            <person name="Heitmann K."/>
            <person name="Widdel F."/>
            <person name="Reinhardt R."/>
        </authorList>
    </citation>
    <scope>NUCLEOTIDE SEQUENCE [LARGE SCALE GENOMIC DNA]</scope>
    <source>
        <strain>DSM 19018 / LMG 30748 / EbN1</strain>
    </source>
</reference>
<feature type="chain" id="PRO_0000228162" description="Translation initiation factor IF-2">
    <location>
        <begin position="1"/>
        <end position="945"/>
    </location>
</feature>
<feature type="domain" description="tr-type G">
    <location>
        <begin position="445"/>
        <end position="614"/>
    </location>
</feature>
<feature type="region of interest" description="Disordered" evidence="3">
    <location>
        <begin position="52"/>
        <end position="80"/>
    </location>
</feature>
<feature type="region of interest" description="Disordered" evidence="3">
    <location>
        <begin position="96"/>
        <end position="357"/>
    </location>
</feature>
<feature type="region of interest" description="G1" evidence="1">
    <location>
        <begin position="454"/>
        <end position="461"/>
    </location>
</feature>
<feature type="region of interest" description="G2" evidence="1">
    <location>
        <begin position="479"/>
        <end position="483"/>
    </location>
</feature>
<feature type="region of interest" description="G3" evidence="1">
    <location>
        <begin position="500"/>
        <end position="503"/>
    </location>
</feature>
<feature type="region of interest" description="G4" evidence="1">
    <location>
        <begin position="554"/>
        <end position="557"/>
    </location>
</feature>
<feature type="region of interest" description="G5" evidence="1">
    <location>
        <begin position="590"/>
        <end position="592"/>
    </location>
</feature>
<feature type="compositionally biased region" description="Acidic residues" evidence="3">
    <location>
        <begin position="153"/>
        <end position="175"/>
    </location>
</feature>
<feature type="compositionally biased region" description="Basic and acidic residues" evidence="3">
    <location>
        <begin position="215"/>
        <end position="283"/>
    </location>
</feature>
<feature type="compositionally biased region" description="Basic and acidic residues" evidence="3">
    <location>
        <begin position="294"/>
        <end position="310"/>
    </location>
</feature>
<feature type="binding site" evidence="2">
    <location>
        <begin position="454"/>
        <end position="461"/>
    </location>
    <ligand>
        <name>GTP</name>
        <dbReference type="ChEBI" id="CHEBI:37565"/>
    </ligand>
</feature>
<feature type="binding site" evidence="2">
    <location>
        <begin position="500"/>
        <end position="504"/>
    </location>
    <ligand>
        <name>GTP</name>
        <dbReference type="ChEBI" id="CHEBI:37565"/>
    </ligand>
</feature>
<feature type="binding site" evidence="2">
    <location>
        <begin position="554"/>
        <end position="557"/>
    </location>
    <ligand>
        <name>GTP</name>
        <dbReference type="ChEBI" id="CHEBI:37565"/>
    </ligand>
</feature>
<keyword id="KW-0963">Cytoplasm</keyword>
<keyword id="KW-0342">GTP-binding</keyword>
<keyword id="KW-0396">Initiation factor</keyword>
<keyword id="KW-0547">Nucleotide-binding</keyword>
<keyword id="KW-0648">Protein biosynthesis</keyword>
<keyword id="KW-1185">Reference proteome</keyword>
<protein>
    <recommendedName>
        <fullName evidence="2">Translation initiation factor IF-2</fullName>
    </recommendedName>
</protein>
<accession>Q5NZS1</accession>